<name>DEOC_THET8</name>
<sequence length="220" mass="23307">MDLAAHIDHTLLKPTATLEEVAKAAEEALEYGFYGLCIPPSYVAWVRARYPHAPFRLVTVVGFPLGYQEKEVKALEAALACARGADEVDMVLHLGRAKAGDLDYLEAEVRAVREAVPQAVLKVILETGYFSPEEIARLAEAAIRGGADFLKTSTGFGPRGASLEDVALLVRVAQGRAQVKAAGGIRDRETALRMLKAGASRLGTSSGVALVAGEGGTLGY</sequence>
<accession>Q5SJ28</accession>
<accession>Q7SIC8</accession>
<comment type="function">
    <text evidence="1">Catalyzes a reversible aldol reaction between acetaldehyde and D-glyceraldehyde 3-phosphate to generate 2-deoxy-D-ribose 5-phosphate.</text>
</comment>
<comment type="catalytic activity">
    <reaction evidence="1">
        <text>2-deoxy-D-ribose 5-phosphate = D-glyceraldehyde 3-phosphate + acetaldehyde</text>
        <dbReference type="Rhea" id="RHEA:12821"/>
        <dbReference type="ChEBI" id="CHEBI:15343"/>
        <dbReference type="ChEBI" id="CHEBI:59776"/>
        <dbReference type="ChEBI" id="CHEBI:62877"/>
        <dbReference type="EC" id="4.1.2.4"/>
    </reaction>
</comment>
<comment type="pathway">
    <text evidence="1">Carbohydrate degradation; 2-deoxy-D-ribose 1-phosphate degradation; D-glyceraldehyde 3-phosphate and acetaldehyde from 2-deoxy-alpha-D-ribose 1-phosphate: step 2/2.</text>
</comment>
<comment type="subunit">
    <text evidence="2">Homotetramer, in solution and in the crystal structure.</text>
</comment>
<comment type="subcellular location">
    <subcellularLocation>
        <location evidence="1">Cytoplasm</location>
    </subcellularLocation>
</comment>
<comment type="similarity">
    <text evidence="1">Belongs to the DeoC/FbaB aldolase family. DeoC type 1 subfamily.</text>
</comment>
<keyword id="KW-0002">3D-structure</keyword>
<keyword id="KW-0963">Cytoplasm</keyword>
<keyword id="KW-0456">Lyase</keyword>
<keyword id="KW-1185">Reference proteome</keyword>
<keyword id="KW-0704">Schiff base</keyword>
<reference key="1">
    <citation type="submission" date="2004-11" db="EMBL/GenBank/DDBJ databases">
        <title>Complete genome sequence of Thermus thermophilus HB8.</title>
        <authorList>
            <person name="Masui R."/>
            <person name="Kurokawa K."/>
            <person name="Nakagawa N."/>
            <person name="Tokunaga F."/>
            <person name="Koyama Y."/>
            <person name="Shibata T."/>
            <person name="Oshima T."/>
            <person name="Yokoyama S."/>
            <person name="Yasunaga T."/>
            <person name="Kuramitsu S."/>
        </authorList>
    </citation>
    <scope>NUCLEOTIDE SEQUENCE [LARGE SCALE GENOMIC DNA]</scope>
    <source>
        <strain>ATCC 27634 / DSM 579 / HB8</strain>
    </source>
</reference>
<reference key="2">
    <citation type="journal article" date="2004" name="Acta Crystallogr. D">
        <title>Structure of aldolase from Thermus thermophilus HB8 showing the contribution of oligomeric state to thermostability.</title>
        <authorList>
            <person name="Lokanath N.K."/>
            <person name="Shiromizu I."/>
            <person name="Ohshima N."/>
            <person name="Nodake Y."/>
            <person name="Sugahara M."/>
            <person name="Yokoyama S."/>
            <person name="Kuramitsu S."/>
            <person name="Miyano M."/>
            <person name="Kunishima N."/>
        </authorList>
    </citation>
    <scope>X-RAY CRYSTALLOGRAPHY (1.4 ANGSTROMS) IN COMPLEX WITH AND WITHOUT 2-DEOXYRIBOSE-5-PHOSPHATE</scope>
    <scope>SUBUNIT</scope>
    <scope>ACTIVE SITE</scope>
    <source>
        <strain>ATCC 27634 / DSM 579 / HB8</strain>
    </source>
</reference>
<gene>
    <name evidence="1" type="primary">deoC</name>
    <name type="ordered locus">TTHA1186</name>
</gene>
<feature type="chain" id="PRO_0000231572" description="Deoxyribose-phosphate aldolase">
    <location>
        <begin position="1"/>
        <end position="220"/>
    </location>
</feature>
<feature type="active site" description="Proton donor/acceptor" evidence="1 3">
    <location>
        <position position="89"/>
    </location>
</feature>
<feature type="active site" description="Schiff-base intermediate with acetaldehyde" evidence="1 3">
    <location>
        <position position="151"/>
    </location>
</feature>
<feature type="active site" description="Proton donor/acceptor" evidence="1 3">
    <location>
        <position position="180"/>
    </location>
</feature>
<feature type="helix" evidence="4">
    <location>
        <begin position="3"/>
        <end position="6"/>
    </location>
</feature>
<feature type="strand" evidence="4">
    <location>
        <begin position="7"/>
        <end position="10"/>
    </location>
</feature>
<feature type="helix" evidence="4">
    <location>
        <begin position="18"/>
        <end position="31"/>
    </location>
</feature>
<feature type="strand" evidence="4">
    <location>
        <begin position="34"/>
        <end position="37"/>
    </location>
</feature>
<feature type="helix" evidence="4">
    <location>
        <begin position="40"/>
        <end position="42"/>
    </location>
</feature>
<feature type="helix" evidence="4">
    <location>
        <begin position="43"/>
        <end position="49"/>
    </location>
</feature>
<feature type="strand" evidence="4">
    <location>
        <begin position="54"/>
        <end position="62"/>
    </location>
</feature>
<feature type="turn" evidence="4">
    <location>
        <begin position="63"/>
        <end position="65"/>
    </location>
</feature>
<feature type="helix" evidence="4">
    <location>
        <begin position="70"/>
        <end position="82"/>
    </location>
</feature>
<feature type="strand" evidence="4">
    <location>
        <begin position="86"/>
        <end position="91"/>
    </location>
</feature>
<feature type="helix" evidence="4">
    <location>
        <begin position="94"/>
        <end position="98"/>
    </location>
</feature>
<feature type="helix" evidence="4">
    <location>
        <begin position="102"/>
        <end position="115"/>
    </location>
</feature>
<feature type="strand" evidence="4">
    <location>
        <begin position="119"/>
        <end position="124"/>
    </location>
</feature>
<feature type="helix" evidence="4">
    <location>
        <begin position="127"/>
        <end position="129"/>
    </location>
</feature>
<feature type="helix" evidence="4">
    <location>
        <begin position="132"/>
        <end position="145"/>
    </location>
</feature>
<feature type="strand" evidence="4">
    <location>
        <begin position="148"/>
        <end position="151"/>
    </location>
</feature>
<feature type="strand" evidence="4">
    <location>
        <begin position="155"/>
        <end position="158"/>
    </location>
</feature>
<feature type="helix" evidence="4">
    <location>
        <begin position="163"/>
        <end position="173"/>
    </location>
</feature>
<feature type="strand" evidence="4">
    <location>
        <begin position="176"/>
        <end position="184"/>
    </location>
</feature>
<feature type="helix" evidence="4">
    <location>
        <begin position="188"/>
        <end position="196"/>
    </location>
</feature>
<feature type="strand" evidence="4">
    <location>
        <begin position="200"/>
        <end position="204"/>
    </location>
</feature>
<feature type="helix" evidence="4">
    <location>
        <begin position="207"/>
        <end position="211"/>
    </location>
</feature>
<organism>
    <name type="scientific">Thermus thermophilus (strain ATCC 27634 / DSM 579 / HB8)</name>
    <dbReference type="NCBI Taxonomy" id="300852"/>
    <lineage>
        <taxon>Bacteria</taxon>
        <taxon>Thermotogati</taxon>
        <taxon>Deinococcota</taxon>
        <taxon>Deinococci</taxon>
        <taxon>Thermales</taxon>
        <taxon>Thermaceae</taxon>
        <taxon>Thermus</taxon>
    </lineage>
</organism>
<dbReference type="EC" id="4.1.2.4" evidence="1"/>
<dbReference type="EMBL" id="AP008226">
    <property type="protein sequence ID" value="BAD71009.1"/>
    <property type="molecule type" value="Genomic_DNA"/>
</dbReference>
<dbReference type="RefSeq" id="WP_011228499.1">
    <property type="nucleotide sequence ID" value="NC_006461.1"/>
</dbReference>
<dbReference type="RefSeq" id="YP_144452.1">
    <property type="nucleotide sequence ID" value="NC_006461.1"/>
</dbReference>
<dbReference type="PDB" id="1J2W">
    <property type="method" value="X-ray"/>
    <property type="resolution" value="1.50 A"/>
    <property type="chains" value="A/B/C/D=1-220"/>
</dbReference>
<dbReference type="PDB" id="1UB3">
    <property type="method" value="X-ray"/>
    <property type="resolution" value="1.40 A"/>
    <property type="chains" value="A/B/C/D=1-220"/>
</dbReference>
<dbReference type="PDBsum" id="1J2W"/>
<dbReference type="PDBsum" id="1UB3"/>
<dbReference type="SMR" id="Q5SJ28"/>
<dbReference type="DrugBank" id="DB04087">
    <property type="generic name" value="Open Form of 2'-Deoxy-Ribofuranose-5'-Phosphate"/>
</dbReference>
<dbReference type="EnsemblBacteria" id="BAD71009">
    <property type="protein sequence ID" value="BAD71009"/>
    <property type="gene ID" value="BAD71009"/>
</dbReference>
<dbReference type="GeneID" id="3169004"/>
<dbReference type="KEGG" id="ttj:TTHA1186"/>
<dbReference type="PATRIC" id="fig|300852.9.peg.1167"/>
<dbReference type="eggNOG" id="COG0274">
    <property type="taxonomic scope" value="Bacteria"/>
</dbReference>
<dbReference type="HOGENOM" id="CLU_053595_0_1_0"/>
<dbReference type="PhylomeDB" id="Q5SJ28"/>
<dbReference type="UniPathway" id="UPA00002">
    <property type="reaction ID" value="UER00468"/>
</dbReference>
<dbReference type="EvolutionaryTrace" id="Q5SJ28"/>
<dbReference type="Proteomes" id="UP000000532">
    <property type="component" value="Chromosome"/>
</dbReference>
<dbReference type="GO" id="GO:0005737">
    <property type="term" value="C:cytoplasm"/>
    <property type="evidence" value="ECO:0007669"/>
    <property type="project" value="UniProtKB-SubCell"/>
</dbReference>
<dbReference type="GO" id="GO:0004139">
    <property type="term" value="F:deoxyribose-phosphate aldolase activity"/>
    <property type="evidence" value="ECO:0007669"/>
    <property type="project" value="UniProtKB-UniRule"/>
</dbReference>
<dbReference type="GO" id="GO:0006018">
    <property type="term" value="P:2-deoxyribose 1-phosphate catabolic process"/>
    <property type="evidence" value="ECO:0007669"/>
    <property type="project" value="UniProtKB-UniRule"/>
</dbReference>
<dbReference type="GO" id="GO:0016052">
    <property type="term" value="P:carbohydrate catabolic process"/>
    <property type="evidence" value="ECO:0007669"/>
    <property type="project" value="TreeGrafter"/>
</dbReference>
<dbReference type="GO" id="GO:0009264">
    <property type="term" value="P:deoxyribonucleotide catabolic process"/>
    <property type="evidence" value="ECO:0007669"/>
    <property type="project" value="InterPro"/>
</dbReference>
<dbReference type="CDD" id="cd00959">
    <property type="entry name" value="DeoC"/>
    <property type="match status" value="1"/>
</dbReference>
<dbReference type="FunFam" id="3.20.20.70:FF:000044">
    <property type="entry name" value="Deoxyribose-phosphate aldolase"/>
    <property type="match status" value="1"/>
</dbReference>
<dbReference type="Gene3D" id="3.20.20.70">
    <property type="entry name" value="Aldolase class I"/>
    <property type="match status" value="1"/>
</dbReference>
<dbReference type="HAMAP" id="MF_00114">
    <property type="entry name" value="DeoC_type1"/>
    <property type="match status" value="1"/>
</dbReference>
<dbReference type="InterPro" id="IPR013785">
    <property type="entry name" value="Aldolase_TIM"/>
</dbReference>
<dbReference type="InterPro" id="IPR011343">
    <property type="entry name" value="DeoC"/>
</dbReference>
<dbReference type="InterPro" id="IPR002915">
    <property type="entry name" value="DeoC/FbaB/LacD_aldolase"/>
</dbReference>
<dbReference type="InterPro" id="IPR028581">
    <property type="entry name" value="DeoC_typeI"/>
</dbReference>
<dbReference type="NCBIfam" id="TIGR00126">
    <property type="entry name" value="deoC"/>
    <property type="match status" value="1"/>
</dbReference>
<dbReference type="PANTHER" id="PTHR10889">
    <property type="entry name" value="DEOXYRIBOSE-PHOSPHATE ALDOLASE"/>
    <property type="match status" value="1"/>
</dbReference>
<dbReference type="PANTHER" id="PTHR10889:SF1">
    <property type="entry name" value="DEOXYRIBOSE-PHOSPHATE ALDOLASE"/>
    <property type="match status" value="1"/>
</dbReference>
<dbReference type="Pfam" id="PF01791">
    <property type="entry name" value="DeoC"/>
    <property type="match status" value="1"/>
</dbReference>
<dbReference type="PIRSF" id="PIRSF001357">
    <property type="entry name" value="DeoC"/>
    <property type="match status" value="1"/>
</dbReference>
<dbReference type="SMART" id="SM01133">
    <property type="entry name" value="DeoC"/>
    <property type="match status" value="1"/>
</dbReference>
<dbReference type="SUPFAM" id="SSF51569">
    <property type="entry name" value="Aldolase"/>
    <property type="match status" value="1"/>
</dbReference>
<protein>
    <recommendedName>
        <fullName evidence="1">Deoxyribose-phosphate aldolase</fullName>
        <shortName evidence="1">DERA</shortName>
        <ecNumber evidence="1">4.1.2.4</ecNumber>
    </recommendedName>
    <alternativeName>
        <fullName evidence="1">2-deoxy-D-ribose 5-phosphate aldolase</fullName>
    </alternativeName>
    <alternativeName>
        <fullName evidence="1">Phosphodeoxyriboaldolase</fullName>
        <shortName evidence="1">Deoxyriboaldolase</shortName>
    </alternativeName>
</protein>
<evidence type="ECO:0000255" key="1">
    <source>
        <dbReference type="HAMAP-Rule" id="MF_00114"/>
    </source>
</evidence>
<evidence type="ECO:0000269" key="2">
    <source>
    </source>
</evidence>
<evidence type="ECO:0000305" key="3">
    <source>
    </source>
</evidence>
<evidence type="ECO:0007829" key="4">
    <source>
        <dbReference type="PDB" id="1UB3"/>
    </source>
</evidence>
<proteinExistence type="evidence at protein level"/>